<proteinExistence type="inferred from homology"/>
<accession>Q0AKD3</accession>
<name>SECB_MARMM</name>
<gene>
    <name evidence="1" type="primary">secB</name>
    <name type="ordered locus">Mmar10_2979</name>
</gene>
<comment type="function">
    <text evidence="1">One of the proteins required for the normal export of preproteins out of the cell cytoplasm. It is a molecular chaperone that binds to a subset of precursor proteins, maintaining them in a translocation-competent state. It also specifically binds to its receptor SecA.</text>
</comment>
<comment type="subunit">
    <text evidence="1">Homotetramer, a dimer of dimers. One homotetramer interacts with 1 SecA dimer.</text>
</comment>
<comment type="subcellular location">
    <subcellularLocation>
        <location evidence="1">Cytoplasm</location>
    </subcellularLocation>
</comment>
<comment type="similarity">
    <text evidence="1">Belongs to the SecB family.</text>
</comment>
<keyword id="KW-0143">Chaperone</keyword>
<keyword id="KW-0963">Cytoplasm</keyword>
<keyword id="KW-0653">Protein transport</keyword>
<keyword id="KW-1185">Reference proteome</keyword>
<keyword id="KW-0811">Translocation</keyword>
<keyword id="KW-0813">Transport</keyword>
<organism>
    <name type="scientific">Maricaulis maris (strain MCS10)</name>
    <name type="common">Caulobacter maris</name>
    <dbReference type="NCBI Taxonomy" id="394221"/>
    <lineage>
        <taxon>Bacteria</taxon>
        <taxon>Pseudomonadati</taxon>
        <taxon>Pseudomonadota</taxon>
        <taxon>Alphaproteobacteria</taxon>
        <taxon>Maricaulales</taxon>
        <taxon>Maricaulaceae</taxon>
        <taxon>Maricaulis</taxon>
    </lineage>
</organism>
<feature type="chain" id="PRO_0000318244" description="Protein-export protein SecB">
    <location>
        <begin position="1"/>
        <end position="172"/>
    </location>
</feature>
<evidence type="ECO:0000255" key="1">
    <source>
        <dbReference type="HAMAP-Rule" id="MF_00821"/>
    </source>
</evidence>
<protein>
    <recommendedName>
        <fullName evidence="1">Protein-export protein SecB</fullName>
    </recommendedName>
</protein>
<dbReference type="EMBL" id="CP000449">
    <property type="protein sequence ID" value="ABI67260.1"/>
    <property type="molecule type" value="Genomic_DNA"/>
</dbReference>
<dbReference type="RefSeq" id="WP_011644904.1">
    <property type="nucleotide sequence ID" value="NC_008347.1"/>
</dbReference>
<dbReference type="SMR" id="Q0AKD3"/>
<dbReference type="STRING" id="394221.Mmar10_2979"/>
<dbReference type="KEGG" id="mmr:Mmar10_2979"/>
<dbReference type="eggNOG" id="COG1952">
    <property type="taxonomic scope" value="Bacteria"/>
</dbReference>
<dbReference type="HOGENOM" id="CLU_111574_0_0_5"/>
<dbReference type="OrthoDB" id="9795145at2"/>
<dbReference type="Proteomes" id="UP000001964">
    <property type="component" value="Chromosome"/>
</dbReference>
<dbReference type="GO" id="GO:0005737">
    <property type="term" value="C:cytoplasm"/>
    <property type="evidence" value="ECO:0007669"/>
    <property type="project" value="UniProtKB-SubCell"/>
</dbReference>
<dbReference type="GO" id="GO:0051082">
    <property type="term" value="F:unfolded protein binding"/>
    <property type="evidence" value="ECO:0007669"/>
    <property type="project" value="InterPro"/>
</dbReference>
<dbReference type="GO" id="GO:0006457">
    <property type="term" value="P:protein folding"/>
    <property type="evidence" value="ECO:0007669"/>
    <property type="project" value="UniProtKB-UniRule"/>
</dbReference>
<dbReference type="GO" id="GO:0051262">
    <property type="term" value="P:protein tetramerization"/>
    <property type="evidence" value="ECO:0007669"/>
    <property type="project" value="InterPro"/>
</dbReference>
<dbReference type="GO" id="GO:0015031">
    <property type="term" value="P:protein transport"/>
    <property type="evidence" value="ECO:0007669"/>
    <property type="project" value="UniProtKB-UniRule"/>
</dbReference>
<dbReference type="Gene3D" id="3.10.420.10">
    <property type="entry name" value="SecB-like"/>
    <property type="match status" value="1"/>
</dbReference>
<dbReference type="HAMAP" id="MF_00821">
    <property type="entry name" value="SecB"/>
    <property type="match status" value="1"/>
</dbReference>
<dbReference type="InterPro" id="IPR003708">
    <property type="entry name" value="SecB"/>
</dbReference>
<dbReference type="InterPro" id="IPR035958">
    <property type="entry name" value="SecB-like_sf"/>
</dbReference>
<dbReference type="NCBIfam" id="NF004392">
    <property type="entry name" value="PRK05751.1-3"/>
    <property type="match status" value="1"/>
</dbReference>
<dbReference type="NCBIfam" id="TIGR00809">
    <property type="entry name" value="secB"/>
    <property type="match status" value="1"/>
</dbReference>
<dbReference type="PANTHER" id="PTHR36918">
    <property type="match status" value="1"/>
</dbReference>
<dbReference type="PANTHER" id="PTHR36918:SF1">
    <property type="entry name" value="PROTEIN-EXPORT PROTEIN SECB"/>
    <property type="match status" value="1"/>
</dbReference>
<dbReference type="Pfam" id="PF02556">
    <property type="entry name" value="SecB"/>
    <property type="match status" value="1"/>
</dbReference>
<dbReference type="PRINTS" id="PR01594">
    <property type="entry name" value="SECBCHAPRONE"/>
</dbReference>
<dbReference type="SUPFAM" id="SSF54611">
    <property type="entry name" value="SecB-like"/>
    <property type="match status" value="1"/>
</dbReference>
<sequence>MTDAPNTPADNAAAQAPQLRVLAQYVKDLSFENPGAPETLRPGQQAPAIDLAIDVQARTAGEDTFEVVLTVNAKASRDESVVFIAELSYAGLFQLANVGETDREPFLLIECPRLIFPFARRVLADATRDGNFPPLMLDPVDFAGLYRAQLAKRAAAAPGSESNGNGDPAAAN</sequence>
<reference key="1">
    <citation type="submission" date="2006-08" db="EMBL/GenBank/DDBJ databases">
        <title>Complete sequence of Maricaulis maris MCS10.</title>
        <authorList>
            <consortium name="US DOE Joint Genome Institute"/>
            <person name="Copeland A."/>
            <person name="Lucas S."/>
            <person name="Lapidus A."/>
            <person name="Barry K."/>
            <person name="Detter J.C."/>
            <person name="Glavina del Rio T."/>
            <person name="Hammon N."/>
            <person name="Israni S."/>
            <person name="Dalin E."/>
            <person name="Tice H."/>
            <person name="Pitluck S."/>
            <person name="Saunders E."/>
            <person name="Brettin T."/>
            <person name="Bruce D."/>
            <person name="Han C."/>
            <person name="Tapia R."/>
            <person name="Gilna P."/>
            <person name="Schmutz J."/>
            <person name="Larimer F."/>
            <person name="Land M."/>
            <person name="Hauser L."/>
            <person name="Kyrpides N."/>
            <person name="Mikhailova N."/>
            <person name="Viollier P."/>
            <person name="Stephens C."/>
            <person name="Richardson P."/>
        </authorList>
    </citation>
    <scope>NUCLEOTIDE SEQUENCE [LARGE SCALE GENOMIC DNA]</scope>
    <source>
        <strain>MCS10</strain>
    </source>
</reference>